<comment type="function">
    <text evidence="1">May be involved in recombination.</text>
</comment>
<comment type="subcellular location">
    <subcellularLocation>
        <location evidence="1">Cytoplasm</location>
        <location evidence="1">Nucleoid</location>
    </subcellularLocation>
</comment>
<comment type="similarity">
    <text evidence="1">Belongs to the RdgC family.</text>
</comment>
<protein>
    <recommendedName>
        <fullName evidence="1">Recombination-associated protein RdgC</fullName>
    </recommendedName>
</protein>
<reference key="1">
    <citation type="submission" date="2008-02" db="EMBL/GenBank/DDBJ databases">
        <title>Complete sequence of Yersinia pseudotuberculosis YPIII.</title>
        <authorList>
            <consortium name="US DOE Joint Genome Institute"/>
            <person name="Copeland A."/>
            <person name="Lucas S."/>
            <person name="Lapidus A."/>
            <person name="Glavina del Rio T."/>
            <person name="Dalin E."/>
            <person name="Tice H."/>
            <person name="Bruce D."/>
            <person name="Goodwin L."/>
            <person name="Pitluck S."/>
            <person name="Munk A.C."/>
            <person name="Brettin T."/>
            <person name="Detter J.C."/>
            <person name="Han C."/>
            <person name="Tapia R."/>
            <person name="Schmutz J."/>
            <person name="Larimer F."/>
            <person name="Land M."/>
            <person name="Hauser L."/>
            <person name="Challacombe J.F."/>
            <person name="Green L."/>
            <person name="Lindler L.E."/>
            <person name="Nikolich M.P."/>
            <person name="Richardson P."/>
        </authorList>
    </citation>
    <scope>NUCLEOTIDE SEQUENCE [LARGE SCALE GENOMIC DNA]</scope>
    <source>
        <strain>YPIII</strain>
    </source>
</reference>
<proteinExistence type="inferred from homology"/>
<dbReference type="EMBL" id="CP000950">
    <property type="protein sequence ID" value="ACA69549.1"/>
    <property type="molecule type" value="Genomic_DNA"/>
</dbReference>
<dbReference type="RefSeq" id="WP_002208691.1">
    <property type="nucleotide sequence ID" value="NZ_CP009792.1"/>
</dbReference>
<dbReference type="SMR" id="B1JIG5"/>
<dbReference type="GeneID" id="57975504"/>
<dbReference type="KEGG" id="ypy:YPK_3280"/>
<dbReference type="PATRIC" id="fig|502800.11.peg.4011"/>
<dbReference type="GO" id="GO:0043590">
    <property type="term" value="C:bacterial nucleoid"/>
    <property type="evidence" value="ECO:0007669"/>
    <property type="project" value="TreeGrafter"/>
</dbReference>
<dbReference type="GO" id="GO:0005737">
    <property type="term" value="C:cytoplasm"/>
    <property type="evidence" value="ECO:0007669"/>
    <property type="project" value="UniProtKB-UniRule"/>
</dbReference>
<dbReference type="GO" id="GO:0003690">
    <property type="term" value="F:double-stranded DNA binding"/>
    <property type="evidence" value="ECO:0007669"/>
    <property type="project" value="TreeGrafter"/>
</dbReference>
<dbReference type="GO" id="GO:0006310">
    <property type="term" value="P:DNA recombination"/>
    <property type="evidence" value="ECO:0007669"/>
    <property type="project" value="UniProtKB-UniRule"/>
</dbReference>
<dbReference type="GO" id="GO:0000018">
    <property type="term" value="P:regulation of DNA recombination"/>
    <property type="evidence" value="ECO:0007669"/>
    <property type="project" value="TreeGrafter"/>
</dbReference>
<dbReference type="HAMAP" id="MF_00194">
    <property type="entry name" value="RdgC"/>
    <property type="match status" value="1"/>
</dbReference>
<dbReference type="InterPro" id="IPR007476">
    <property type="entry name" value="RdgC"/>
</dbReference>
<dbReference type="NCBIfam" id="NF001460">
    <property type="entry name" value="PRK00321.1-1"/>
    <property type="match status" value="1"/>
</dbReference>
<dbReference type="NCBIfam" id="NF001462">
    <property type="entry name" value="PRK00321.1-3"/>
    <property type="match status" value="1"/>
</dbReference>
<dbReference type="NCBIfam" id="NF001464">
    <property type="entry name" value="PRK00321.1-5"/>
    <property type="match status" value="1"/>
</dbReference>
<dbReference type="PANTHER" id="PTHR38103">
    <property type="entry name" value="RECOMBINATION-ASSOCIATED PROTEIN RDGC"/>
    <property type="match status" value="1"/>
</dbReference>
<dbReference type="PANTHER" id="PTHR38103:SF1">
    <property type="entry name" value="RECOMBINATION-ASSOCIATED PROTEIN RDGC"/>
    <property type="match status" value="1"/>
</dbReference>
<dbReference type="Pfam" id="PF04381">
    <property type="entry name" value="RdgC"/>
    <property type="match status" value="1"/>
</dbReference>
<keyword id="KW-0963">Cytoplasm</keyword>
<keyword id="KW-0233">DNA recombination</keyword>
<organism>
    <name type="scientific">Yersinia pseudotuberculosis serotype O:3 (strain YPIII)</name>
    <dbReference type="NCBI Taxonomy" id="502800"/>
    <lineage>
        <taxon>Bacteria</taxon>
        <taxon>Pseudomonadati</taxon>
        <taxon>Pseudomonadota</taxon>
        <taxon>Gammaproteobacteria</taxon>
        <taxon>Enterobacterales</taxon>
        <taxon>Yersiniaceae</taxon>
        <taxon>Yersinia</taxon>
    </lineage>
</organism>
<feature type="chain" id="PRO_1000099082" description="Recombination-associated protein RdgC">
    <location>
        <begin position="1"/>
        <end position="303"/>
    </location>
</feature>
<accession>B1JIG5</accession>
<evidence type="ECO:0000255" key="1">
    <source>
        <dbReference type="HAMAP-Rule" id="MF_00194"/>
    </source>
</evidence>
<sequence>MLWFKNLMVYRLSREVSLSADEMEKQLSAFSFTPCGSQDMAKTGWVSPMGSHSDALTHTVNGQIVICARKEEKILPSPVIKQELQDKIERLEGEQHRKLKKTEKDSLKDEVLHSLLPRAFSRFNQTFLWIDTVNDLIMVDAASAKRAEDTLALLRKSLGSLPVVPLTLENPIELTLTEWVRSKTLPAGFALMDEAELKAILEDGGVIRCKKQDLFSDEIAVHIEAGKLVTKLALDWQERIQLVLSDDGSLKRLKFADTLRDQNEDIDREDFAQRFDADFILMTSELAALIKNLIEALGGEAQH</sequence>
<name>RDGC_YERPY</name>
<gene>
    <name evidence="1" type="primary">rdgC</name>
    <name type="ordered locus">YPK_3280</name>
</gene>